<reference key="1">
    <citation type="submission" date="2008-01" db="EMBL/GenBank/DDBJ databases">
        <title>Complete sequence of Shewanella halifaxensis HAW-EB4.</title>
        <authorList>
            <consortium name="US DOE Joint Genome Institute"/>
            <person name="Copeland A."/>
            <person name="Lucas S."/>
            <person name="Lapidus A."/>
            <person name="Glavina del Rio T."/>
            <person name="Dalin E."/>
            <person name="Tice H."/>
            <person name="Bruce D."/>
            <person name="Goodwin L."/>
            <person name="Pitluck S."/>
            <person name="Sims D."/>
            <person name="Brettin T."/>
            <person name="Detter J.C."/>
            <person name="Han C."/>
            <person name="Kuske C.R."/>
            <person name="Schmutz J."/>
            <person name="Larimer F."/>
            <person name="Land M."/>
            <person name="Hauser L."/>
            <person name="Kyrpides N."/>
            <person name="Kim E."/>
            <person name="Zhao J.-S."/>
            <person name="Richardson P."/>
        </authorList>
    </citation>
    <scope>NUCLEOTIDE SEQUENCE [LARGE SCALE GENOMIC DNA]</scope>
    <source>
        <strain>HAW-EB4</strain>
    </source>
</reference>
<feature type="chain" id="PRO_1000077998" description="3-phosphoshikimate 1-carboxyvinyltransferase">
    <location>
        <begin position="1"/>
        <end position="426"/>
    </location>
</feature>
<feature type="active site" description="Proton acceptor" evidence="1">
    <location>
        <position position="314"/>
    </location>
</feature>
<feature type="binding site" evidence="1">
    <location>
        <position position="22"/>
    </location>
    <ligand>
        <name>3-phosphoshikimate</name>
        <dbReference type="ChEBI" id="CHEBI:145989"/>
    </ligand>
</feature>
<feature type="binding site" evidence="1">
    <location>
        <position position="22"/>
    </location>
    <ligand>
        <name>phosphoenolpyruvate</name>
        <dbReference type="ChEBI" id="CHEBI:58702"/>
    </ligand>
</feature>
<feature type="binding site" evidence="1">
    <location>
        <position position="23"/>
    </location>
    <ligand>
        <name>3-phosphoshikimate</name>
        <dbReference type="ChEBI" id="CHEBI:145989"/>
    </ligand>
</feature>
<feature type="binding site" evidence="1">
    <location>
        <position position="27"/>
    </location>
    <ligand>
        <name>3-phosphoshikimate</name>
        <dbReference type="ChEBI" id="CHEBI:145989"/>
    </ligand>
</feature>
<feature type="binding site" evidence="1">
    <location>
        <position position="96"/>
    </location>
    <ligand>
        <name>phosphoenolpyruvate</name>
        <dbReference type="ChEBI" id="CHEBI:58702"/>
    </ligand>
</feature>
<feature type="binding site" evidence="1">
    <location>
        <position position="124"/>
    </location>
    <ligand>
        <name>phosphoenolpyruvate</name>
        <dbReference type="ChEBI" id="CHEBI:58702"/>
    </ligand>
</feature>
<feature type="binding site" evidence="1">
    <location>
        <position position="170"/>
    </location>
    <ligand>
        <name>3-phosphoshikimate</name>
        <dbReference type="ChEBI" id="CHEBI:145989"/>
    </ligand>
</feature>
<feature type="binding site" evidence="1">
    <location>
        <position position="171"/>
    </location>
    <ligand>
        <name>3-phosphoshikimate</name>
        <dbReference type="ChEBI" id="CHEBI:145989"/>
    </ligand>
</feature>
<feature type="binding site" evidence="1">
    <location>
        <position position="172"/>
    </location>
    <ligand>
        <name>3-phosphoshikimate</name>
        <dbReference type="ChEBI" id="CHEBI:145989"/>
    </ligand>
</feature>
<feature type="binding site" evidence="1">
    <location>
        <position position="172"/>
    </location>
    <ligand>
        <name>phosphoenolpyruvate</name>
        <dbReference type="ChEBI" id="CHEBI:58702"/>
    </ligand>
</feature>
<feature type="binding site" evidence="1">
    <location>
        <position position="198"/>
    </location>
    <ligand>
        <name>3-phosphoshikimate</name>
        <dbReference type="ChEBI" id="CHEBI:145989"/>
    </ligand>
</feature>
<feature type="binding site" evidence="1">
    <location>
        <position position="314"/>
    </location>
    <ligand>
        <name>3-phosphoshikimate</name>
        <dbReference type="ChEBI" id="CHEBI:145989"/>
    </ligand>
</feature>
<feature type="binding site" evidence="1">
    <location>
        <position position="337"/>
    </location>
    <ligand>
        <name>3-phosphoshikimate</name>
        <dbReference type="ChEBI" id="CHEBI:145989"/>
    </ligand>
</feature>
<feature type="binding site" evidence="1">
    <location>
        <position position="341"/>
    </location>
    <ligand>
        <name>3-phosphoshikimate</name>
        <dbReference type="ChEBI" id="CHEBI:145989"/>
    </ligand>
</feature>
<feature type="binding site" evidence="1">
    <location>
        <position position="345"/>
    </location>
    <ligand>
        <name>phosphoenolpyruvate</name>
        <dbReference type="ChEBI" id="CHEBI:58702"/>
    </ligand>
</feature>
<feature type="binding site" evidence="1">
    <location>
        <position position="387"/>
    </location>
    <ligand>
        <name>phosphoenolpyruvate</name>
        <dbReference type="ChEBI" id="CHEBI:58702"/>
    </ligand>
</feature>
<feature type="binding site" evidence="1">
    <location>
        <position position="412"/>
    </location>
    <ligand>
        <name>phosphoenolpyruvate</name>
        <dbReference type="ChEBI" id="CHEBI:58702"/>
    </ligand>
</feature>
<keyword id="KW-0028">Amino-acid biosynthesis</keyword>
<keyword id="KW-0057">Aromatic amino acid biosynthesis</keyword>
<keyword id="KW-0963">Cytoplasm</keyword>
<keyword id="KW-0808">Transferase</keyword>
<dbReference type="EC" id="2.5.1.19" evidence="1"/>
<dbReference type="EMBL" id="CP000931">
    <property type="protein sequence ID" value="ABZ76604.1"/>
    <property type="molecule type" value="Genomic_DNA"/>
</dbReference>
<dbReference type="RefSeq" id="WP_012277134.1">
    <property type="nucleotide sequence ID" value="NC_010334.1"/>
</dbReference>
<dbReference type="SMR" id="B0TT43"/>
<dbReference type="STRING" id="458817.Shal_2043"/>
<dbReference type="KEGG" id="shl:Shal_2043"/>
<dbReference type="eggNOG" id="COG0128">
    <property type="taxonomic scope" value="Bacteria"/>
</dbReference>
<dbReference type="HOGENOM" id="CLU_024321_0_0_6"/>
<dbReference type="OrthoDB" id="9809920at2"/>
<dbReference type="UniPathway" id="UPA00053">
    <property type="reaction ID" value="UER00089"/>
</dbReference>
<dbReference type="Proteomes" id="UP000001317">
    <property type="component" value="Chromosome"/>
</dbReference>
<dbReference type="GO" id="GO:0005737">
    <property type="term" value="C:cytoplasm"/>
    <property type="evidence" value="ECO:0007669"/>
    <property type="project" value="UniProtKB-SubCell"/>
</dbReference>
<dbReference type="GO" id="GO:0003866">
    <property type="term" value="F:3-phosphoshikimate 1-carboxyvinyltransferase activity"/>
    <property type="evidence" value="ECO:0007669"/>
    <property type="project" value="UniProtKB-UniRule"/>
</dbReference>
<dbReference type="GO" id="GO:0008652">
    <property type="term" value="P:amino acid biosynthetic process"/>
    <property type="evidence" value="ECO:0007669"/>
    <property type="project" value="UniProtKB-KW"/>
</dbReference>
<dbReference type="GO" id="GO:0009073">
    <property type="term" value="P:aromatic amino acid family biosynthetic process"/>
    <property type="evidence" value="ECO:0007669"/>
    <property type="project" value="UniProtKB-KW"/>
</dbReference>
<dbReference type="GO" id="GO:0009423">
    <property type="term" value="P:chorismate biosynthetic process"/>
    <property type="evidence" value="ECO:0007669"/>
    <property type="project" value="UniProtKB-UniRule"/>
</dbReference>
<dbReference type="CDD" id="cd01556">
    <property type="entry name" value="EPSP_synthase"/>
    <property type="match status" value="1"/>
</dbReference>
<dbReference type="FunFam" id="3.65.10.10:FF:000003">
    <property type="entry name" value="3-phosphoshikimate 1-carboxyvinyltransferase"/>
    <property type="match status" value="1"/>
</dbReference>
<dbReference type="FunFam" id="3.65.10.10:FF:000004">
    <property type="entry name" value="3-phosphoshikimate 1-carboxyvinyltransferase"/>
    <property type="match status" value="1"/>
</dbReference>
<dbReference type="Gene3D" id="3.65.10.10">
    <property type="entry name" value="Enolpyruvate transferase domain"/>
    <property type="match status" value="2"/>
</dbReference>
<dbReference type="HAMAP" id="MF_00210">
    <property type="entry name" value="EPSP_synth"/>
    <property type="match status" value="1"/>
</dbReference>
<dbReference type="InterPro" id="IPR001986">
    <property type="entry name" value="Enolpyruvate_Tfrase_dom"/>
</dbReference>
<dbReference type="InterPro" id="IPR036968">
    <property type="entry name" value="Enolpyruvate_Tfrase_sf"/>
</dbReference>
<dbReference type="InterPro" id="IPR006264">
    <property type="entry name" value="EPSP_synthase"/>
</dbReference>
<dbReference type="InterPro" id="IPR023193">
    <property type="entry name" value="EPSP_synthase_CS"/>
</dbReference>
<dbReference type="InterPro" id="IPR013792">
    <property type="entry name" value="RNA3'P_cycl/enolpyr_Trfase_a/b"/>
</dbReference>
<dbReference type="NCBIfam" id="TIGR01356">
    <property type="entry name" value="aroA"/>
    <property type="match status" value="1"/>
</dbReference>
<dbReference type="PANTHER" id="PTHR21090">
    <property type="entry name" value="AROM/DEHYDROQUINATE SYNTHASE"/>
    <property type="match status" value="1"/>
</dbReference>
<dbReference type="PANTHER" id="PTHR21090:SF5">
    <property type="entry name" value="PENTAFUNCTIONAL AROM POLYPEPTIDE"/>
    <property type="match status" value="1"/>
</dbReference>
<dbReference type="Pfam" id="PF00275">
    <property type="entry name" value="EPSP_synthase"/>
    <property type="match status" value="1"/>
</dbReference>
<dbReference type="PIRSF" id="PIRSF000505">
    <property type="entry name" value="EPSPS"/>
    <property type="match status" value="1"/>
</dbReference>
<dbReference type="SUPFAM" id="SSF55205">
    <property type="entry name" value="EPT/RTPC-like"/>
    <property type="match status" value="1"/>
</dbReference>
<dbReference type="PROSITE" id="PS00104">
    <property type="entry name" value="EPSP_SYNTHASE_1"/>
    <property type="match status" value="1"/>
</dbReference>
<dbReference type="PROSITE" id="PS00885">
    <property type="entry name" value="EPSP_SYNTHASE_2"/>
    <property type="match status" value="1"/>
</dbReference>
<proteinExistence type="inferred from homology"/>
<name>AROA_SHEHH</name>
<gene>
    <name evidence="1" type="primary">aroA</name>
    <name type="ordered locus">Shal_2043</name>
</gene>
<evidence type="ECO:0000255" key="1">
    <source>
        <dbReference type="HAMAP-Rule" id="MF_00210"/>
    </source>
</evidence>
<comment type="function">
    <text evidence="1">Catalyzes the transfer of the enolpyruvyl moiety of phosphoenolpyruvate (PEP) to the 5-hydroxyl of shikimate-3-phosphate (S3P) to produce enolpyruvyl shikimate-3-phosphate and inorganic phosphate.</text>
</comment>
<comment type="catalytic activity">
    <reaction evidence="1">
        <text>3-phosphoshikimate + phosphoenolpyruvate = 5-O-(1-carboxyvinyl)-3-phosphoshikimate + phosphate</text>
        <dbReference type="Rhea" id="RHEA:21256"/>
        <dbReference type="ChEBI" id="CHEBI:43474"/>
        <dbReference type="ChEBI" id="CHEBI:57701"/>
        <dbReference type="ChEBI" id="CHEBI:58702"/>
        <dbReference type="ChEBI" id="CHEBI:145989"/>
        <dbReference type="EC" id="2.5.1.19"/>
    </reaction>
    <physiologicalReaction direction="left-to-right" evidence="1">
        <dbReference type="Rhea" id="RHEA:21257"/>
    </physiologicalReaction>
</comment>
<comment type="pathway">
    <text evidence="1">Metabolic intermediate biosynthesis; chorismate biosynthesis; chorismate from D-erythrose 4-phosphate and phosphoenolpyruvate: step 6/7.</text>
</comment>
<comment type="subunit">
    <text evidence="1">Monomer.</text>
</comment>
<comment type="subcellular location">
    <subcellularLocation>
        <location evidence="1">Cytoplasm</location>
    </subcellularLocation>
</comment>
<comment type="similarity">
    <text evidence="1">Belongs to the EPSP synthase family.</text>
</comment>
<accession>B0TT43</accession>
<sequence>MNQLRLEPIKKVSGTINIPGSKSISNRALLLATLASGTTTLTNLLDSDDIRYMLASLKQLGVSYRLSNNNTVCELDGLAGPLNAGEPQTLFLGNAGTAMRPLCAALTLGQGQFTLTGEPRMEERPIGDLVDALRQLGAEVSYLKNEGFPPLNITSTGLNGGNVEIAGDLSSQFLTALLMVAPLAKGDVNIKIKGELVSKPYIDITLALMAQFGVEVQNNDYASFVIKAGQRYVSPGKVLVEGDASSASYFLAAGAIQGGEVKVTGVGKLSIQGDVKFADVLEQMGADIEWGDDYIIARQAKLKAVDLDMNHIPDAAMTIATAALFATGTTRIRNIYNWRIKETDRLAAMATELRKVGAIVDEGHDYISVTPPAKLNTAAIDTYNDHRMAMCFSMMAFADCGITINEPECTSKTFPDYFNQFNALAN</sequence>
<protein>
    <recommendedName>
        <fullName evidence="1">3-phosphoshikimate 1-carboxyvinyltransferase</fullName>
        <ecNumber evidence="1">2.5.1.19</ecNumber>
    </recommendedName>
    <alternativeName>
        <fullName evidence="1">5-enolpyruvylshikimate-3-phosphate synthase</fullName>
        <shortName evidence="1">EPSP synthase</shortName>
        <shortName evidence="1">EPSPS</shortName>
    </alternativeName>
</protein>
<organism>
    <name type="scientific">Shewanella halifaxensis (strain HAW-EB4)</name>
    <dbReference type="NCBI Taxonomy" id="458817"/>
    <lineage>
        <taxon>Bacteria</taxon>
        <taxon>Pseudomonadati</taxon>
        <taxon>Pseudomonadota</taxon>
        <taxon>Gammaproteobacteria</taxon>
        <taxon>Alteromonadales</taxon>
        <taxon>Shewanellaceae</taxon>
        <taxon>Shewanella</taxon>
    </lineage>
</organism>